<accession>A0A0K0PVM5</accession>
<keyword id="KW-0328">Glycosyltransferase</keyword>
<keyword id="KW-0414">Isoprene biosynthesis</keyword>
<keyword id="KW-0808">Transferase</keyword>
<proteinExistence type="evidence at protein level"/>
<protein>
    <recommendedName>
        <fullName evidence="4">UDP-glycosyltransferase 101</fullName>
        <shortName evidence="4 5">UGTPg101</shortName>
        <ecNumber evidence="3">2.4.1.363</ecNumber>
        <ecNumber evidence="3">2.4.1.366</ecNumber>
    </recommendedName>
</protein>
<organism>
    <name type="scientific">Panax ginseng</name>
    <name type="common">Korean ginseng</name>
    <dbReference type="NCBI Taxonomy" id="4054"/>
    <lineage>
        <taxon>Eukaryota</taxon>
        <taxon>Viridiplantae</taxon>
        <taxon>Streptophyta</taxon>
        <taxon>Embryophyta</taxon>
        <taxon>Tracheophyta</taxon>
        <taxon>Spermatophyta</taxon>
        <taxon>Magnoliopsida</taxon>
        <taxon>eudicotyledons</taxon>
        <taxon>Gunneridae</taxon>
        <taxon>Pentapetalae</taxon>
        <taxon>asterids</taxon>
        <taxon>campanulids</taxon>
        <taxon>Apiales</taxon>
        <taxon>Araliaceae</taxon>
        <taxon>Panax</taxon>
    </lineage>
</organism>
<reference key="1">
    <citation type="journal article" date="2015" name="Mol. Plant">
        <title>Characterization of Panax ginseng UDP-glycosyltransferases catalyzing protopanaxatriol and biosyntheses of bioactive ginsenosides F1 and Rh1 in metabolically engineered yeasts.</title>
        <authorList>
            <person name="Wei W."/>
            <person name="Wang P."/>
            <person name="Wei Y."/>
            <person name="Liu Q."/>
            <person name="Yang C."/>
            <person name="Zhao G."/>
            <person name="Yue J."/>
            <person name="Yan X."/>
            <person name="Zhou Z."/>
        </authorList>
    </citation>
    <scope>NUCLEOTIDE SEQUENCE [MRNA]</scope>
    <scope>FUNCTION</scope>
    <scope>CATALYTIC ACTIVITY</scope>
</reference>
<reference key="2">
    <citation type="journal article" date="2018" name="Molecules">
        <title>Progress on the studies of the key enzymes of ginsenoside biosynthesis.</title>
        <authorList>
            <person name="Yang J.-L."/>
            <person name="Hu Z.-F."/>
            <person name="Zhang T.-T."/>
            <person name="Gu A.-D."/>
            <person name="Gong T."/>
            <person name="Zhu P."/>
        </authorList>
    </citation>
    <scope>REVIEW</scope>
    <scope>NOMENCLATURE</scope>
</reference>
<name>UGT11_PANGI</name>
<evidence type="ECO:0000250" key="1">
    <source>
        <dbReference type="UniProtKB" id="A0A0A1HA03"/>
    </source>
</evidence>
<evidence type="ECO:0000250" key="2">
    <source>
        <dbReference type="UniProtKB" id="P51094"/>
    </source>
</evidence>
<evidence type="ECO:0000269" key="3">
    <source>
    </source>
</evidence>
<evidence type="ECO:0000303" key="4">
    <source>
    </source>
</evidence>
<evidence type="ECO:0000303" key="5">
    <source>
    </source>
</evidence>
<evidence type="ECO:0000305" key="6"/>
<sequence>MKSELIFLPAPAIGHLVGMVEMAKLFISRHENLSVTVLIAKFYMDTGVDNYNKSLLTNPTPRLTIVNLPETDPQNYMLKPRHAIFPSVIETQKTHVRDIISGMTQSESTRVVGLLADLLFINIMDIANEFNVPTYVYSPAGAGHLGLAFHLQTLNDKKQDVTEFRNSDTELLVPSFANPVPAEVLPSMYVDKEGGYDYLFSLFRRCRESKAIIINTFEELEPYAINSLRMDSMIPPIYPVGPILNLNGDGQNSDEAAVILGWLDDQPPSSVVFLCFGSYGTFQENQVKEIAMGLERSGHRFLWSLRPSIPKGETKLQLKYSNLEEILPVGFLDRTSCVGKVIGWAPQVAVLGHEAVGGFLSHCGWNSTLESVWCGVPVATWPMYGEQQLNAFEMVKELGIAVEIEVDYKNEYFNMNNDFIVRAEEIETKIKKLMMDEKNSEIRKKVKEMKEKSRLAMSENGSSYNSLAKLFEEIM</sequence>
<dbReference type="EC" id="2.4.1.363" evidence="3"/>
<dbReference type="EC" id="2.4.1.366" evidence="3"/>
<dbReference type="EMBL" id="KP795114">
    <property type="protein sequence ID" value="AKQ76389.1"/>
    <property type="molecule type" value="mRNA"/>
</dbReference>
<dbReference type="SMR" id="A0A0K0PVM5"/>
<dbReference type="KEGG" id="ag:AKQ76389"/>
<dbReference type="BioCyc" id="MetaCyc:MONOMER-20536"/>
<dbReference type="UniPathway" id="UPA00213"/>
<dbReference type="GO" id="GO:0035251">
    <property type="term" value="F:UDP-glucosyltransferase activity"/>
    <property type="evidence" value="ECO:0007669"/>
    <property type="project" value="InterPro"/>
</dbReference>
<dbReference type="GO" id="GO:0016114">
    <property type="term" value="P:terpenoid biosynthetic process"/>
    <property type="evidence" value="ECO:0007669"/>
    <property type="project" value="UniProtKB-UniPathway"/>
</dbReference>
<dbReference type="CDD" id="cd03784">
    <property type="entry name" value="GT1_Gtf-like"/>
    <property type="match status" value="1"/>
</dbReference>
<dbReference type="FunFam" id="3.40.50.2000:FF:000056">
    <property type="entry name" value="Glycosyltransferase"/>
    <property type="match status" value="1"/>
</dbReference>
<dbReference type="Gene3D" id="3.40.50.2000">
    <property type="entry name" value="Glycogen Phosphorylase B"/>
    <property type="match status" value="2"/>
</dbReference>
<dbReference type="InterPro" id="IPR050481">
    <property type="entry name" value="UDP-glycosyltransf_plant"/>
</dbReference>
<dbReference type="InterPro" id="IPR002213">
    <property type="entry name" value="UDP_glucos_trans"/>
</dbReference>
<dbReference type="InterPro" id="IPR035595">
    <property type="entry name" value="UDP_glycos_trans_CS"/>
</dbReference>
<dbReference type="PANTHER" id="PTHR48048">
    <property type="entry name" value="GLYCOSYLTRANSFERASE"/>
    <property type="match status" value="1"/>
</dbReference>
<dbReference type="PANTHER" id="PTHR48048:SF45">
    <property type="entry name" value="GLYCOSYLTRANSFERASE"/>
    <property type="match status" value="1"/>
</dbReference>
<dbReference type="Pfam" id="PF00201">
    <property type="entry name" value="UDPGT"/>
    <property type="match status" value="1"/>
</dbReference>
<dbReference type="SUPFAM" id="SSF53756">
    <property type="entry name" value="UDP-Glycosyltransferase/glycogen phosphorylase"/>
    <property type="match status" value="1"/>
</dbReference>
<dbReference type="PROSITE" id="PS00375">
    <property type="entry name" value="UDPGT"/>
    <property type="match status" value="1"/>
</dbReference>
<comment type="function">
    <text evidence="3">Component of the dammarane-type triterpene saponins (e.g. ginsenosides or panaxosides) biosynthetic pathway (PubMed:26032089). Glycosyltransferase that catalyzes the biosynthesis of ginsenoside F1 from protopanaxatriol (PPT) and the conversion of ginsenoside F1 to ginsenoside Rg1 (PubMed:26032089). Triggers C20-OH glycosylation of ginsenoside Rg3 to produce ginsenoside Rd (PubMed:26032089). Mediates the conversion of protopanaxadiol (PPD) to the ginsenoside compound K (PubMed:26032089).</text>
</comment>
<comment type="catalytic activity">
    <reaction evidence="3">
        <text>(20S)-protopanaxadiol + UDP-alpha-D-glucose = (20S)-ginsenoside C-K + UDP + H(+)</text>
        <dbReference type="Rhea" id="RHEA:57976"/>
        <dbReference type="ChEBI" id="CHEBI:15378"/>
        <dbReference type="ChEBI" id="CHEBI:58223"/>
        <dbReference type="ChEBI" id="CHEBI:58885"/>
        <dbReference type="ChEBI" id="CHEBI:75950"/>
        <dbReference type="ChEBI" id="CHEBI:77146"/>
        <dbReference type="EC" id="2.4.1.363"/>
    </reaction>
    <physiologicalReaction direction="left-to-right" evidence="3">
        <dbReference type="Rhea" id="RHEA:57977"/>
    </physiologicalReaction>
</comment>
<comment type="catalytic activity">
    <reaction evidence="3">
        <text>(20S)-ginsenoside Rg3 + UDP-alpha-D-glucose = (20S)-ginsenoside Rd + UDP + H(+)</text>
        <dbReference type="Rhea" id="RHEA:57984"/>
        <dbReference type="ChEBI" id="CHEBI:15378"/>
        <dbReference type="ChEBI" id="CHEBI:58223"/>
        <dbReference type="ChEBI" id="CHEBI:58885"/>
        <dbReference type="ChEBI" id="CHEBI:67988"/>
        <dbReference type="ChEBI" id="CHEBI:67991"/>
        <dbReference type="EC" id="2.4.1.363"/>
    </reaction>
    <physiologicalReaction direction="left-to-right" evidence="3">
        <dbReference type="Rhea" id="RHEA:57985"/>
    </physiologicalReaction>
</comment>
<comment type="catalytic activity">
    <reaction evidence="3">
        <text>(20S)-protopanaxatriol + UDP-alpha-D-glucose = (20S)-ginsenoside F1 + UDP + H(+)</text>
        <dbReference type="Rhea" id="RHEA:57980"/>
        <dbReference type="ChEBI" id="CHEBI:15378"/>
        <dbReference type="ChEBI" id="CHEBI:58223"/>
        <dbReference type="ChEBI" id="CHEBI:58885"/>
        <dbReference type="ChEBI" id="CHEBI:75951"/>
        <dbReference type="ChEBI" id="CHEBI:77150"/>
        <dbReference type="EC" id="2.4.1.363"/>
    </reaction>
    <physiologicalReaction direction="left-to-right" evidence="3">
        <dbReference type="Rhea" id="RHEA:57981"/>
    </physiologicalReaction>
</comment>
<comment type="catalytic activity">
    <reaction evidence="3">
        <text>(20S)-ginsenoside F1 + UDP-alpha-D-glucose = (20S)-ginsenoside Rg1 + UDP + H(+)</text>
        <dbReference type="Rhea" id="RHEA:58008"/>
        <dbReference type="ChEBI" id="CHEBI:15378"/>
        <dbReference type="ChEBI" id="CHEBI:58223"/>
        <dbReference type="ChEBI" id="CHEBI:58885"/>
        <dbReference type="ChEBI" id="CHEBI:67987"/>
        <dbReference type="ChEBI" id="CHEBI:77150"/>
        <dbReference type="EC" id="2.4.1.366"/>
    </reaction>
    <physiologicalReaction direction="left-to-right" evidence="3">
        <dbReference type="Rhea" id="RHEA:58009"/>
    </physiologicalReaction>
</comment>
<comment type="pathway">
    <text evidence="6">Secondary metabolite biosynthesis; terpenoid biosynthesis.</text>
</comment>
<comment type="similarity">
    <text evidence="6">Belongs to the UDP-glycosyltransferase family.</text>
</comment>
<feature type="chain" id="PRO_0000446965" description="UDP-glycosyltransferase 101">
    <location>
        <begin position="1"/>
        <end position="475"/>
    </location>
</feature>
<feature type="active site" description="Proton acceptor" evidence="1">
    <location>
        <position position="15"/>
    </location>
</feature>
<feature type="active site" description="Charge relay" evidence="1">
    <location>
        <position position="117"/>
    </location>
</feature>
<feature type="binding site" evidence="2">
    <location>
        <position position="15"/>
    </location>
    <ligand>
        <name>an anthocyanidin</name>
        <dbReference type="ChEBI" id="CHEBI:143576"/>
    </ligand>
</feature>
<feature type="binding site" evidence="1">
    <location>
        <position position="345"/>
    </location>
    <ligand>
        <name>UDP-alpha-D-glucose</name>
        <dbReference type="ChEBI" id="CHEBI:58885"/>
    </ligand>
</feature>
<feature type="binding site" evidence="1">
    <location>
        <position position="347"/>
    </location>
    <ligand>
        <name>UDP-alpha-D-glucose</name>
        <dbReference type="ChEBI" id="CHEBI:58885"/>
    </ligand>
</feature>
<feature type="binding site" evidence="1">
    <location>
        <position position="362"/>
    </location>
    <ligand>
        <name>UDP-alpha-D-glucose</name>
        <dbReference type="ChEBI" id="CHEBI:58885"/>
    </ligand>
</feature>
<feature type="binding site" evidence="1">
    <location>
        <position position="365"/>
    </location>
    <ligand>
        <name>UDP-alpha-D-glucose</name>
        <dbReference type="ChEBI" id="CHEBI:58885"/>
    </ligand>
</feature>
<feature type="binding site" evidence="1">
    <location>
        <position position="366"/>
    </location>
    <ligand>
        <name>UDP-alpha-D-glucose</name>
        <dbReference type="ChEBI" id="CHEBI:58885"/>
    </ligand>
</feature>
<feature type="binding site" evidence="1">
    <location>
        <position position="367"/>
    </location>
    <ligand>
        <name>UDP-alpha-D-glucose</name>
        <dbReference type="ChEBI" id="CHEBI:58885"/>
    </ligand>
</feature>
<feature type="binding site" evidence="1">
    <location>
        <position position="370"/>
    </location>
    <ligand>
        <name>UDP-alpha-D-glucose</name>
        <dbReference type="ChEBI" id="CHEBI:58885"/>
    </ligand>
</feature>
<feature type="binding site" evidence="2">
    <location>
        <position position="385"/>
    </location>
    <ligand>
        <name>an anthocyanidin</name>
        <dbReference type="ChEBI" id="CHEBI:143576"/>
    </ligand>
</feature>
<feature type="binding site" evidence="1">
    <location>
        <position position="386"/>
    </location>
    <ligand>
        <name>UDP-alpha-D-glucose</name>
        <dbReference type="ChEBI" id="CHEBI:58885"/>
    </ligand>
</feature>
<feature type="binding site" evidence="1">
    <location>
        <position position="387"/>
    </location>
    <ligand>
        <name>UDP-alpha-D-glucose</name>
        <dbReference type="ChEBI" id="CHEBI:58885"/>
    </ligand>
</feature>
<gene>
    <name evidence="4" type="primary">UGT101</name>
</gene>